<feature type="chain" id="PRO_0000212281" description="Adapter protein MecA">
    <location>
        <begin position="1"/>
        <end position="239"/>
    </location>
</feature>
<feature type="region of interest" description="Disordered" evidence="2">
    <location>
        <begin position="118"/>
        <end position="137"/>
    </location>
</feature>
<feature type="compositionally biased region" description="Basic and acidic residues" evidence="2">
    <location>
        <begin position="118"/>
        <end position="128"/>
    </location>
</feature>
<comment type="function">
    <text evidence="1">Enables the recognition and targeting of unfolded and aggregated proteins to the ClpC protease or to other proteins involved in proteolysis.</text>
</comment>
<comment type="subunit">
    <text evidence="1">Homodimer.</text>
</comment>
<comment type="domain">
    <text>The N-terminal domain probably binds unfolded/aggregated proteins; the C-terminal domain interacts with ClpC.</text>
</comment>
<comment type="similarity">
    <text evidence="1">Belongs to the MecA family.</text>
</comment>
<comment type="caution">
    <text evidence="3">This protein is unrelated to the penicillin-binding protein Pbp2a, also called MecA, that confers resistance to methicillin in several strains of S.aureus (MRSA) and is used as a marker for the identification of MRSA isolates.</text>
</comment>
<gene>
    <name evidence="1" type="primary">mecA</name>
    <name type="ordered locus">MW0880</name>
</gene>
<sequence>MRIERVDDTTVKLFITYSDIEARGFSREDLWTNRKRGEEFFWSMMDEINEEEDFVVEGPLWIQVHAFEKGVEVTISKSKNEDMMNMSDDDATDQFDEQVQELLAQTLEGEDQLEELFEQRTKEKEAQGSKRQKSSARKNTRTIIVKFNDLEDVINYAYHSNPITTEFEDLLYMVDGTYYYAVHFDSHVDQEVINDSYSQLLEFAYPTDRTEVYLNDYAKIIMSHNVTAQVRRYFPETTE</sequence>
<reference key="1">
    <citation type="journal article" date="2002" name="Lancet">
        <title>Genome and virulence determinants of high virulence community-acquired MRSA.</title>
        <authorList>
            <person name="Baba T."/>
            <person name="Takeuchi F."/>
            <person name="Kuroda M."/>
            <person name="Yuzawa H."/>
            <person name="Aoki K."/>
            <person name="Oguchi A."/>
            <person name="Nagai Y."/>
            <person name="Iwama N."/>
            <person name="Asano K."/>
            <person name="Naimi T."/>
            <person name="Kuroda H."/>
            <person name="Cui L."/>
            <person name="Yamamoto K."/>
            <person name="Hiramatsu K."/>
        </authorList>
    </citation>
    <scope>NUCLEOTIDE SEQUENCE [LARGE SCALE GENOMIC DNA]</scope>
    <source>
        <strain>MW2</strain>
    </source>
</reference>
<accession>P60186</accession>
<accession>Q99V92</accession>
<name>MECA_STAAW</name>
<organism>
    <name type="scientific">Staphylococcus aureus (strain MW2)</name>
    <dbReference type="NCBI Taxonomy" id="196620"/>
    <lineage>
        <taxon>Bacteria</taxon>
        <taxon>Bacillati</taxon>
        <taxon>Bacillota</taxon>
        <taxon>Bacilli</taxon>
        <taxon>Bacillales</taxon>
        <taxon>Staphylococcaceae</taxon>
        <taxon>Staphylococcus</taxon>
    </lineage>
</organism>
<proteinExistence type="inferred from homology"/>
<protein>
    <recommendedName>
        <fullName evidence="1">Adapter protein MecA</fullName>
    </recommendedName>
</protein>
<dbReference type="EMBL" id="BA000033">
    <property type="protein sequence ID" value="BAB94745.1"/>
    <property type="molecule type" value="Genomic_DNA"/>
</dbReference>
<dbReference type="RefSeq" id="WP_001217728.1">
    <property type="nucleotide sequence ID" value="NC_003923.1"/>
</dbReference>
<dbReference type="SMR" id="P60186"/>
<dbReference type="GeneID" id="98345315"/>
<dbReference type="KEGG" id="sam:MW0880"/>
<dbReference type="HOGENOM" id="CLU_071496_2_1_9"/>
<dbReference type="GO" id="GO:0030674">
    <property type="term" value="F:protein-macromolecule adaptor activity"/>
    <property type="evidence" value="ECO:0007669"/>
    <property type="project" value="UniProtKB-UniRule"/>
</dbReference>
<dbReference type="Gene3D" id="3.30.70.1950">
    <property type="match status" value="1"/>
</dbReference>
<dbReference type="HAMAP" id="MF_01124">
    <property type="entry name" value="MecA"/>
    <property type="match status" value="1"/>
</dbReference>
<dbReference type="InterPro" id="IPR038471">
    <property type="entry name" value="MecA_C_sf"/>
</dbReference>
<dbReference type="InterPro" id="IPR008681">
    <property type="entry name" value="Neg-reg_MecA"/>
</dbReference>
<dbReference type="NCBIfam" id="NF002642">
    <property type="entry name" value="PRK02315.1-3"/>
    <property type="match status" value="1"/>
</dbReference>
<dbReference type="NCBIfam" id="NF002644">
    <property type="entry name" value="PRK02315.1-5"/>
    <property type="match status" value="1"/>
</dbReference>
<dbReference type="PANTHER" id="PTHR39161">
    <property type="entry name" value="ADAPTER PROTEIN MECA"/>
    <property type="match status" value="1"/>
</dbReference>
<dbReference type="PANTHER" id="PTHR39161:SF1">
    <property type="entry name" value="ADAPTER PROTEIN MECA 1"/>
    <property type="match status" value="1"/>
</dbReference>
<dbReference type="Pfam" id="PF05389">
    <property type="entry name" value="MecA"/>
    <property type="match status" value="1"/>
</dbReference>
<dbReference type="PIRSF" id="PIRSF029008">
    <property type="entry name" value="MecA"/>
    <property type="match status" value="1"/>
</dbReference>
<evidence type="ECO:0000255" key="1">
    <source>
        <dbReference type="HAMAP-Rule" id="MF_01124"/>
    </source>
</evidence>
<evidence type="ECO:0000256" key="2">
    <source>
        <dbReference type="SAM" id="MobiDB-lite"/>
    </source>
</evidence>
<evidence type="ECO:0000305" key="3"/>